<feature type="chain" id="PRO_1000119496" description="Homoserine kinase">
    <location>
        <begin position="1"/>
        <end position="316"/>
    </location>
</feature>
<dbReference type="EC" id="2.7.1.39" evidence="1"/>
<dbReference type="EMBL" id="FM209186">
    <property type="protein sequence ID" value="CAW30645.1"/>
    <property type="molecule type" value="Genomic_DNA"/>
</dbReference>
<dbReference type="RefSeq" id="WP_003102827.1">
    <property type="nucleotide sequence ID" value="NC_011770.1"/>
</dbReference>
<dbReference type="SMR" id="B7V732"/>
<dbReference type="KEGG" id="pag:PLES_58911"/>
<dbReference type="HOGENOM" id="CLU_053300_0_0_6"/>
<dbReference type="UniPathway" id="UPA00050">
    <property type="reaction ID" value="UER00064"/>
</dbReference>
<dbReference type="GO" id="GO:0005524">
    <property type="term" value="F:ATP binding"/>
    <property type="evidence" value="ECO:0007669"/>
    <property type="project" value="UniProtKB-KW"/>
</dbReference>
<dbReference type="GO" id="GO:0004413">
    <property type="term" value="F:homoserine kinase activity"/>
    <property type="evidence" value="ECO:0007669"/>
    <property type="project" value="UniProtKB-UniRule"/>
</dbReference>
<dbReference type="GO" id="GO:0009088">
    <property type="term" value="P:threonine biosynthetic process"/>
    <property type="evidence" value="ECO:0007669"/>
    <property type="project" value="UniProtKB-UniRule"/>
</dbReference>
<dbReference type="CDD" id="cd05153">
    <property type="entry name" value="HomoserineK_II"/>
    <property type="match status" value="1"/>
</dbReference>
<dbReference type="Gene3D" id="3.90.1200.10">
    <property type="match status" value="1"/>
</dbReference>
<dbReference type="Gene3D" id="3.30.200.20">
    <property type="entry name" value="Phosphorylase Kinase, domain 1"/>
    <property type="match status" value="1"/>
</dbReference>
<dbReference type="HAMAP" id="MF_00301">
    <property type="entry name" value="Homoser_kinase_2"/>
    <property type="match status" value="1"/>
</dbReference>
<dbReference type="InterPro" id="IPR002575">
    <property type="entry name" value="Aminoglycoside_PTrfase"/>
</dbReference>
<dbReference type="InterPro" id="IPR005280">
    <property type="entry name" value="Homoserine_kinase_II"/>
</dbReference>
<dbReference type="InterPro" id="IPR011009">
    <property type="entry name" value="Kinase-like_dom_sf"/>
</dbReference>
<dbReference type="InterPro" id="IPR050249">
    <property type="entry name" value="Pseudomonas-type_ThrB"/>
</dbReference>
<dbReference type="NCBIfam" id="NF003558">
    <property type="entry name" value="PRK05231.1"/>
    <property type="match status" value="1"/>
</dbReference>
<dbReference type="NCBIfam" id="TIGR00938">
    <property type="entry name" value="thrB_alt"/>
    <property type="match status" value="1"/>
</dbReference>
<dbReference type="PANTHER" id="PTHR21064:SF6">
    <property type="entry name" value="AMINOGLYCOSIDE PHOSPHOTRANSFERASE DOMAIN-CONTAINING PROTEIN"/>
    <property type="match status" value="1"/>
</dbReference>
<dbReference type="PANTHER" id="PTHR21064">
    <property type="entry name" value="AMINOGLYCOSIDE PHOSPHOTRANSFERASE DOMAIN-CONTAINING PROTEIN-RELATED"/>
    <property type="match status" value="1"/>
</dbReference>
<dbReference type="Pfam" id="PF01636">
    <property type="entry name" value="APH"/>
    <property type="match status" value="1"/>
</dbReference>
<dbReference type="SUPFAM" id="SSF56112">
    <property type="entry name" value="Protein kinase-like (PK-like)"/>
    <property type="match status" value="1"/>
</dbReference>
<evidence type="ECO:0000255" key="1">
    <source>
        <dbReference type="HAMAP-Rule" id="MF_00301"/>
    </source>
</evidence>
<gene>
    <name evidence="1" type="primary">thrB</name>
    <name type="ordered locus">PLES_58911</name>
</gene>
<organism>
    <name type="scientific">Pseudomonas aeruginosa (strain LESB58)</name>
    <dbReference type="NCBI Taxonomy" id="557722"/>
    <lineage>
        <taxon>Bacteria</taxon>
        <taxon>Pseudomonadati</taxon>
        <taxon>Pseudomonadota</taxon>
        <taxon>Gammaproteobacteria</taxon>
        <taxon>Pseudomonadales</taxon>
        <taxon>Pseudomonadaceae</taxon>
        <taxon>Pseudomonas</taxon>
    </lineage>
</organism>
<reference key="1">
    <citation type="journal article" date="2009" name="Genome Res.">
        <title>Newly introduced genomic prophage islands are critical determinants of in vivo competitiveness in the Liverpool epidemic strain of Pseudomonas aeruginosa.</title>
        <authorList>
            <person name="Winstanley C."/>
            <person name="Langille M.G.I."/>
            <person name="Fothergill J.L."/>
            <person name="Kukavica-Ibrulj I."/>
            <person name="Paradis-Bleau C."/>
            <person name="Sanschagrin F."/>
            <person name="Thomson N.R."/>
            <person name="Winsor G.L."/>
            <person name="Quail M.A."/>
            <person name="Lennard N."/>
            <person name="Bignell A."/>
            <person name="Clarke L."/>
            <person name="Seeger K."/>
            <person name="Saunders D."/>
            <person name="Harris D."/>
            <person name="Parkhill J."/>
            <person name="Hancock R.E.W."/>
            <person name="Brinkman F.S.L."/>
            <person name="Levesque R.C."/>
        </authorList>
    </citation>
    <scope>NUCLEOTIDE SEQUENCE [LARGE SCALE GENOMIC DNA]</scope>
    <source>
        <strain>LESB58</strain>
    </source>
</reference>
<sequence>MSVFTPLERSTLEAFLAPYDLGRLRDFRGIAEGSENSNFFVSLEHGEFVLTLVERGPVQDLPFFIELLDVLHEDGLPVPYALRTRDGEALRRLEGKPALLQPRLAGRHERQPNAHHCQEVGDLLGHLHAATRGRILERPSDRGLPWMLEQGANLAPRLPEQARALLAPALAEIAALDAERPALPRANLHADLFRDNVLFDGPHLAGLIDFYNACSGWMLYDLAITLNDWCSNTDGSLDPARARALLAAYANRRPFTALEAEHWPSMLRVACVRFWLSRLIAAEAFAGQDVLIHDPAEFEMRLAQRQNVEIHLPFAL</sequence>
<comment type="catalytic activity">
    <reaction evidence="1">
        <text>L-homoserine + ATP = O-phospho-L-homoserine + ADP + H(+)</text>
        <dbReference type="Rhea" id="RHEA:13985"/>
        <dbReference type="ChEBI" id="CHEBI:15378"/>
        <dbReference type="ChEBI" id="CHEBI:30616"/>
        <dbReference type="ChEBI" id="CHEBI:57476"/>
        <dbReference type="ChEBI" id="CHEBI:57590"/>
        <dbReference type="ChEBI" id="CHEBI:456216"/>
        <dbReference type="EC" id="2.7.1.39"/>
    </reaction>
</comment>
<comment type="pathway">
    <text evidence="1">Amino-acid biosynthesis; L-threonine biosynthesis; L-threonine from L-aspartate: step 4/5.</text>
</comment>
<comment type="similarity">
    <text evidence="1">Belongs to the pseudomonas-type ThrB family.</text>
</comment>
<proteinExistence type="inferred from homology"/>
<keyword id="KW-0028">Amino-acid biosynthesis</keyword>
<keyword id="KW-0067">ATP-binding</keyword>
<keyword id="KW-0418">Kinase</keyword>
<keyword id="KW-0547">Nucleotide-binding</keyword>
<keyword id="KW-0791">Threonine biosynthesis</keyword>
<keyword id="KW-0808">Transferase</keyword>
<accession>B7V732</accession>
<protein>
    <recommendedName>
        <fullName evidence="1">Homoserine kinase</fullName>
        <shortName evidence="1">HK</shortName>
        <shortName evidence="1">HSK</shortName>
        <ecNumber evidence="1">2.7.1.39</ecNumber>
    </recommendedName>
</protein>
<name>KHSE_PSEA8</name>